<sequence length="614" mass="70882">MSIIFFIILFPLIGFLFLSTIQDFIFKRYTLNIGIFSIFISFFITCFYGVSILKNNNQVFTQILWKWLSINEFKIDFGFFLDGLSLSMLFVITGVGLLIHIFSSWYMRYKEGQSRFFAYTNLFIASMSVLVLADNFLFMYLGWEGVSVCSYLLIGFYYTELKNNLCAFKAFILTRVSDVFLMIGMFLIYREFNSFNFQEIKFLSSFLNVENFYYLDYITLFLLLGVIGKSAQLPLQTWLSDAMVGPTPVSALIHAATMVTAGVYLIARTHFLFLLTPGILYLVGLIGTLTILVSSISALVQKDIKRILAYSTMSQIGYMFLALGVKAWSAAITHLIMHAIFKALLFLSAGSLIKSCKNEKNIFKMGGLRKQLPFLYISFIVGGASLVSFPLITAGFYSKGNILFSVLKSGCIDFFIIGLFCSFLTAIYTFRMIFVIFHGKNIHTADSSTNLQHNIPLFVLLLLSTVFGSYISPPLSDVFPLSYTPIDHKFAFEIICSILSLSGIYLSYYIWIKNLYVLDKIFQFKFMRYLYYFFLKGWGFNWFYKISFVYFYLYISKRLSADPLNKIINYFLKVTQIFNFYLLKTSNGYVRWYVASMILGINFIFLLMLFFYFN</sequence>
<accession>P57262</accession>
<gene>
    <name type="primary">nuoL</name>
    <name type="ordered locus">BU164</name>
</gene>
<dbReference type="EC" id="7.1.1.-"/>
<dbReference type="EMBL" id="BA000003">
    <property type="protein sequence ID" value="BAB12882.1"/>
    <property type="molecule type" value="Genomic_DNA"/>
</dbReference>
<dbReference type="RefSeq" id="NP_239996.1">
    <property type="nucleotide sequence ID" value="NC_002528.1"/>
</dbReference>
<dbReference type="RefSeq" id="WP_010895980.1">
    <property type="nucleotide sequence ID" value="NC_002528.1"/>
</dbReference>
<dbReference type="SMR" id="P57262"/>
<dbReference type="STRING" id="563178.BUAP5A_162"/>
<dbReference type="EnsemblBacteria" id="BAB12882">
    <property type="protein sequence ID" value="BAB12882"/>
    <property type="gene ID" value="BAB12882"/>
</dbReference>
<dbReference type="KEGG" id="buc:BU164"/>
<dbReference type="PATRIC" id="fig|107806.10.peg.174"/>
<dbReference type="eggNOG" id="COG1009">
    <property type="taxonomic scope" value="Bacteria"/>
</dbReference>
<dbReference type="HOGENOM" id="CLU_007100_6_2_6"/>
<dbReference type="Proteomes" id="UP000001806">
    <property type="component" value="Chromosome"/>
</dbReference>
<dbReference type="GO" id="GO:0005886">
    <property type="term" value="C:plasma membrane"/>
    <property type="evidence" value="ECO:0007669"/>
    <property type="project" value="UniProtKB-SubCell"/>
</dbReference>
<dbReference type="GO" id="GO:0008137">
    <property type="term" value="F:NADH dehydrogenase (ubiquinone) activity"/>
    <property type="evidence" value="ECO:0007669"/>
    <property type="project" value="InterPro"/>
</dbReference>
<dbReference type="GO" id="GO:0048038">
    <property type="term" value="F:quinone binding"/>
    <property type="evidence" value="ECO:0007669"/>
    <property type="project" value="UniProtKB-KW"/>
</dbReference>
<dbReference type="GO" id="GO:0042773">
    <property type="term" value="P:ATP synthesis coupled electron transport"/>
    <property type="evidence" value="ECO:0007669"/>
    <property type="project" value="InterPro"/>
</dbReference>
<dbReference type="GO" id="GO:0015990">
    <property type="term" value="P:electron transport coupled proton transport"/>
    <property type="evidence" value="ECO:0007669"/>
    <property type="project" value="TreeGrafter"/>
</dbReference>
<dbReference type="Gene3D" id="1.20.5.2700">
    <property type="match status" value="1"/>
</dbReference>
<dbReference type="InterPro" id="IPR018393">
    <property type="entry name" value="NADHpl_OxRdtase_5_subgr"/>
</dbReference>
<dbReference type="InterPro" id="IPR001750">
    <property type="entry name" value="ND/Mrp_TM"/>
</dbReference>
<dbReference type="InterPro" id="IPR003945">
    <property type="entry name" value="NU5C-like"/>
</dbReference>
<dbReference type="InterPro" id="IPR001516">
    <property type="entry name" value="Proton_antipo_N"/>
</dbReference>
<dbReference type="NCBIfam" id="TIGR01974">
    <property type="entry name" value="NDH_I_L"/>
    <property type="match status" value="1"/>
</dbReference>
<dbReference type="NCBIfam" id="NF005141">
    <property type="entry name" value="PRK06590.1"/>
    <property type="match status" value="1"/>
</dbReference>
<dbReference type="PANTHER" id="PTHR42829">
    <property type="entry name" value="NADH-UBIQUINONE OXIDOREDUCTASE CHAIN 5"/>
    <property type="match status" value="1"/>
</dbReference>
<dbReference type="PANTHER" id="PTHR42829:SF2">
    <property type="entry name" value="NADH-UBIQUINONE OXIDOREDUCTASE CHAIN 5"/>
    <property type="match status" value="1"/>
</dbReference>
<dbReference type="Pfam" id="PF00361">
    <property type="entry name" value="Proton_antipo_M"/>
    <property type="match status" value="1"/>
</dbReference>
<dbReference type="Pfam" id="PF00662">
    <property type="entry name" value="Proton_antipo_N"/>
    <property type="match status" value="1"/>
</dbReference>
<dbReference type="PRINTS" id="PR01434">
    <property type="entry name" value="NADHDHGNASE5"/>
</dbReference>
<dbReference type="PRINTS" id="PR01435">
    <property type="entry name" value="NPOXDRDTASE5"/>
</dbReference>
<organism>
    <name type="scientific">Buchnera aphidicola subsp. Acyrthosiphon pisum (strain APS)</name>
    <name type="common">Acyrthosiphon pisum symbiotic bacterium</name>
    <dbReference type="NCBI Taxonomy" id="107806"/>
    <lineage>
        <taxon>Bacteria</taxon>
        <taxon>Pseudomonadati</taxon>
        <taxon>Pseudomonadota</taxon>
        <taxon>Gammaproteobacteria</taxon>
        <taxon>Enterobacterales</taxon>
        <taxon>Erwiniaceae</taxon>
        <taxon>Buchnera</taxon>
    </lineage>
</organism>
<name>NUOL_BUCAI</name>
<proteinExistence type="inferred from homology"/>
<feature type="chain" id="PRO_0000118214" description="NADH-quinone oxidoreductase subunit L">
    <location>
        <begin position="1"/>
        <end position="614"/>
    </location>
</feature>
<feature type="transmembrane region" description="Helical" evidence="2">
    <location>
        <begin position="1"/>
        <end position="21"/>
    </location>
</feature>
<feature type="transmembrane region" description="Helical" evidence="2">
    <location>
        <begin position="33"/>
        <end position="53"/>
    </location>
</feature>
<feature type="transmembrane region" description="Helical" evidence="2">
    <location>
        <begin position="79"/>
        <end position="99"/>
    </location>
</feature>
<feature type="transmembrane region" description="Helical" evidence="2">
    <location>
        <begin position="136"/>
        <end position="156"/>
    </location>
</feature>
<feature type="transmembrane region" description="Helical" evidence="2">
    <location>
        <begin position="168"/>
        <end position="188"/>
    </location>
</feature>
<feature type="transmembrane region" description="Helical" evidence="2">
    <location>
        <begin position="207"/>
        <end position="227"/>
    </location>
</feature>
<feature type="transmembrane region" description="Helical" evidence="2">
    <location>
        <begin position="247"/>
        <end position="267"/>
    </location>
</feature>
<feature type="transmembrane region" description="Helical" evidence="2">
    <location>
        <begin position="271"/>
        <end position="291"/>
    </location>
</feature>
<feature type="transmembrane region" description="Helical" evidence="2">
    <location>
        <begin position="327"/>
        <end position="347"/>
    </location>
</feature>
<feature type="transmembrane region" description="Helical" evidence="2">
    <location>
        <begin position="372"/>
        <end position="392"/>
    </location>
</feature>
<feature type="transmembrane region" description="Helical" evidence="2">
    <location>
        <begin position="410"/>
        <end position="430"/>
    </location>
</feature>
<feature type="transmembrane region" description="Helical" evidence="2">
    <location>
        <begin position="455"/>
        <end position="475"/>
    </location>
</feature>
<feature type="transmembrane region" description="Helical" evidence="2">
    <location>
        <begin position="492"/>
        <end position="512"/>
    </location>
</feature>
<feature type="transmembrane region" description="Helical" evidence="2">
    <location>
        <begin position="533"/>
        <end position="553"/>
    </location>
</feature>
<feature type="transmembrane region" description="Helical" evidence="2">
    <location>
        <begin position="593"/>
        <end position="613"/>
    </location>
</feature>
<protein>
    <recommendedName>
        <fullName>NADH-quinone oxidoreductase subunit L</fullName>
        <ecNumber>7.1.1.-</ecNumber>
    </recommendedName>
    <alternativeName>
        <fullName>NADH dehydrogenase I subunit L</fullName>
    </alternativeName>
    <alternativeName>
        <fullName>NDH-1 subunit L</fullName>
    </alternativeName>
</protein>
<comment type="function">
    <text evidence="1">NDH-1 shuttles electrons from NADH, via FMN and iron-sulfur (Fe-S) centers, to quinones in the respiratory chain. Couples the redox reaction to proton translocation (for every two electrons transferred, four hydrogen ions are translocated across the cytoplasmic membrane), and thus conserves the redox energy in a proton gradient (By similarity).</text>
</comment>
<comment type="catalytic activity">
    <reaction>
        <text>a quinone + NADH + 5 H(+)(in) = a quinol + NAD(+) + 4 H(+)(out)</text>
        <dbReference type="Rhea" id="RHEA:57888"/>
        <dbReference type="ChEBI" id="CHEBI:15378"/>
        <dbReference type="ChEBI" id="CHEBI:24646"/>
        <dbReference type="ChEBI" id="CHEBI:57540"/>
        <dbReference type="ChEBI" id="CHEBI:57945"/>
        <dbReference type="ChEBI" id="CHEBI:132124"/>
    </reaction>
</comment>
<comment type="subunit">
    <text evidence="1">Composed of 13 different subunits. Subunits NuoA, H, J, K, L, M, N constitute the membrane sector of the complex (By similarity).</text>
</comment>
<comment type="subcellular location">
    <subcellularLocation>
        <location evidence="3">Cell membrane</location>
        <topology evidence="3">Multi-pass membrane protein</topology>
    </subcellularLocation>
</comment>
<comment type="similarity">
    <text evidence="3">Belongs to the complex I subunit 5 family.</text>
</comment>
<evidence type="ECO:0000250" key="1"/>
<evidence type="ECO:0000255" key="2"/>
<evidence type="ECO:0000305" key="3"/>
<keyword id="KW-1003">Cell membrane</keyword>
<keyword id="KW-0472">Membrane</keyword>
<keyword id="KW-0520">NAD</keyword>
<keyword id="KW-0874">Quinone</keyword>
<keyword id="KW-1185">Reference proteome</keyword>
<keyword id="KW-1278">Translocase</keyword>
<keyword id="KW-0812">Transmembrane</keyword>
<keyword id="KW-1133">Transmembrane helix</keyword>
<reference key="1">
    <citation type="journal article" date="2000" name="Nature">
        <title>Genome sequence of the endocellular bacterial symbiont of aphids Buchnera sp. APS.</title>
        <authorList>
            <person name="Shigenobu S."/>
            <person name="Watanabe H."/>
            <person name="Hattori M."/>
            <person name="Sakaki Y."/>
            <person name="Ishikawa H."/>
        </authorList>
    </citation>
    <scope>NUCLEOTIDE SEQUENCE [LARGE SCALE GENOMIC DNA]</scope>
    <source>
        <strain>APS</strain>
    </source>
</reference>